<protein>
    <recommendedName>
        <fullName evidence="1">Cell division protein ZapD</fullName>
    </recommendedName>
    <alternativeName>
        <fullName evidence="1">Z ring-associated protein D</fullName>
    </alternativeName>
</protein>
<name>ZAPD_ECOK1</name>
<reference key="1">
    <citation type="journal article" date="2007" name="J. Bacteriol.">
        <title>The genome sequence of avian pathogenic Escherichia coli strain O1:K1:H7 shares strong similarities with human extraintestinal pathogenic E. coli genomes.</title>
        <authorList>
            <person name="Johnson T.J."/>
            <person name="Kariyawasam S."/>
            <person name="Wannemuehler Y."/>
            <person name="Mangiamele P."/>
            <person name="Johnson S.J."/>
            <person name="Doetkott C."/>
            <person name="Skyberg J.A."/>
            <person name="Lynne A.M."/>
            <person name="Johnson J.R."/>
            <person name="Nolan L.K."/>
        </authorList>
    </citation>
    <scope>NUCLEOTIDE SEQUENCE [LARGE SCALE GENOMIC DNA]</scope>
</reference>
<feature type="chain" id="PRO_1000064908" description="Cell division protein ZapD">
    <location>
        <begin position="1"/>
        <end position="247"/>
    </location>
</feature>
<evidence type="ECO:0000255" key="1">
    <source>
        <dbReference type="HAMAP-Rule" id="MF_01092"/>
    </source>
</evidence>
<comment type="function">
    <text evidence="1">Cell division factor that enhances FtsZ-ring assembly. Directly interacts with FtsZ and promotes bundling of FtsZ protofilaments, with a reduction in FtsZ GTPase activity.</text>
</comment>
<comment type="subunit">
    <text evidence="1">Interacts with FtsZ.</text>
</comment>
<comment type="subcellular location">
    <subcellularLocation>
        <location evidence="1">Cytoplasm</location>
    </subcellularLocation>
    <text evidence="1">Localizes to mid-cell in an FtsZ-dependent manner.</text>
</comment>
<comment type="similarity">
    <text evidence="1">Belongs to the ZapD family.</text>
</comment>
<organism>
    <name type="scientific">Escherichia coli O1:K1 / APEC</name>
    <dbReference type="NCBI Taxonomy" id="405955"/>
    <lineage>
        <taxon>Bacteria</taxon>
        <taxon>Pseudomonadati</taxon>
        <taxon>Pseudomonadota</taxon>
        <taxon>Gammaproteobacteria</taxon>
        <taxon>Enterobacterales</taxon>
        <taxon>Enterobacteriaceae</taxon>
        <taxon>Escherichia</taxon>
    </lineage>
</organism>
<gene>
    <name evidence="1" type="primary">zapD</name>
    <name type="ordered locus">Ecok1_00910</name>
    <name type="ORF">APECO1_1886</name>
</gene>
<dbReference type="EMBL" id="CP000468">
    <property type="protein sequence ID" value="ABI99584.1"/>
    <property type="molecule type" value="Genomic_DNA"/>
</dbReference>
<dbReference type="RefSeq" id="WP_001194731.1">
    <property type="nucleotide sequence ID" value="NZ_CADILS010000048.1"/>
</dbReference>
<dbReference type="SMR" id="A1A7E5"/>
<dbReference type="KEGG" id="ecv:APECO1_1886"/>
<dbReference type="HOGENOM" id="CLU_076303_0_0_6"/>
<dbReference type="Proteomes" id="UP000008216">
    <property type="component" value="Chromosome"/>
</dbReference>
<dbReference type="GO" id="GO:0032153">
    <property type="term" value="C:cell division site"/>
    <property type="evidence" value="ECO:0007669"/>
    <property type="project" value="TreeGrafter"/>
</dbReference>
<dbReference type="GO" id="GO:0005737">
    <property type="term" value="C:cytoplasm"/>
    <property type="evidence" value="ECO:0007669"/>
    <property type="project" value="UniProtKB-SubCell"/>
</dbReference>
<dbReference type="GO" id="GO:0000917">
    <property type="term" value="P:division septum assembly"/>
    <property type="evidence" value="ECO:0007669"/>
    <property type="project" value="UniProtKB-KW"/>
</dbReference>
<dbReference type="GO" id="GO:0043093">
    <property type="term" value="P:FtsZ-dependent cytokinesis"/>
    <property type="evidence" value="ECO:0007669"/>
    <property type="project" value="UniProtKB-UniRule"/>
</dbReference>
<dbReference type="FunFam" id="1.10.3900.10:FF:000001">
    <property type="entry name" value="Cell division protein ZapD"/>
    <property type="match status" value="1"/>
</dbReference>
<dbReference type="FunFam" id="2.60.440.10:FF:000001">
    <property type="entry name" value="Cell division protein ZapD"/>
    <property type="match status" value="1"/>
</dbReference>
<dbReference type="Gene3D" id="1.10.3900.10">
    <property type="entry name" value="YacF-like"/>
    <property type="match status" value="1"/>
</dbReference>
<dbReference type="Gene3D" id="2.60.440.10">
    <property type="entry name" value="YacF-like domains"/>
    <property type="match status" value="1"/>
</dbReference>
<dbReference type="HAMAP" id="MF_01092">
    <property type="entry name" value="ZapD"/>
    <property type="match status" value="1"/>
</dbReference>
<dbReference type="InterPro" id="IPR009777">
    <property type="entry name" value="ZapD"/>
</dbReference>
<dbReference type="InterPro" id="IPR027462">
    <property type="entry name" value="ZapD_C"/>
</dbReference>
<dbReference type="InterPro" id="IPR036268">
    <property type="entry name" value="ZapD_sf"/>
</dbReference>
<dbReference type="NCBIfam" id="NF003653">
    <property type="entry name" value="PRK05287.1-1"/>
    <property type="match status" value="1"/>
</dbReference>
<dbReference type="NCBIfam" id="NF003655">
    <property type="entry name" value="PRK05287.1-3"/>
    <property type="match status" value="1"/>
</dbReference>
<dbReference type="PANTHER" id="PTHR39455">
    <property type="entry name" value="CELL DIVISION PROTEIN ZAPD"/>
    <property type="match status" value="1"/>
</dbReference>
<dbReference type="PANTHER" id="PTHR39455:SF1">
    <property type="entry name" value="CELL DIVISION PROTEIN ZAPD"/>
    <property type="match status" value="1"/>
</dbReference>
<dbReference type="Pfam" id="PF07072">
    <property type="entry name" value="ZapD"/>
    <property type="match status" value="1"/>
</dbReference>
<dbReference type="SUPFAM" id="SSF160950">
    <property type="entry name" value="YacF-like"/>
    <property type="match status" value="1"/>
</dbReference>
<accession>A1A7E5</accession>
<keyword id="KW-0131">Cell cycle</keyword>
<keyword id="KW-0132">Cell division</keyword>
<keyword id="KW-0963">Cytoplasm</keyword>
<keyword id="KW-1185">Reference proteome</keyword>
<keyword id="KW-0717">Septation</keyword>
<proteinExistence type="inferred from homology"/>
<sequence>MQTQVLFEHPLNEKMRTWLRIEFLIQQLTVNLPIVDHAGALHFFRNVSELLDVFERGEVRTELLKELDRQQRKLQTWIGVPGVDQSRIEALIQQLKAAGSVLISAPRIGQFLREDRLIALVRQRLSIPGGCCSFDLPTLHIWLHLPQAQRDSQVETWIASLNPLTQALTMVLDLIRQSAPFRKQTSLNGFYQDNGGDADLLRLNLSLDSQLYPQISGHKSRFAIRFMPLDSENGQVPERLDFELACC</sequence>